<proteinExistence type="inferred from homology"/>
<comment type="function">
    <text evidence="1">Prevents the cell division inhibition by proteins MinC and MinD at internal division sites while permitting inhibition at polar sites. This ensures cell division at the proper site by restricting the formation of a division septum at the midpoint of the long axis of the cell.</text>
</comment>
<comment type="similarity">
    <text evidence="1">Belongs to the MinE family.</text>
</comment>
<name>MINE_RHIJ3</name>
<dbReference type="EMBL" id="AM236085">
    <property type="protein sequence ID" value="CAK03497.1"/>
    <property type="molecule type" value="Genomic_DNA"/>
</dbReference>
<dbReference type="RefSeq" id="WP_003548116.1">
    <property type="nucleotide sequence ID" value="NC_008384.1"/>
</dbReference>
<dbReference type="SMR" id="Q1M5J2"/>
<dbReference type="EnsemblBacteria" id="CAK03497">
    <property type="protein sequence ID" value="CAK03497"/>
    <property type="gene ID" value="pRL110544"/>
</dbReference>
<dbReference type="GeneID" id="67487834"/>
<dbReference type="KEGG" id="rle:pRL110544"/>
<dbReference type="HOGENOM" id="CLU_137929_2_0_5"/>
<dbReference type="Proteomes" id="UP000006575">
    <property type="component" value="Plasmid pRL11"/>
</dbReference>
<dbReference type="GO" id="GO:0051301">
    <property type="term" value="P:cell division"/>
    <property type="evidence" value="ECO:0007669"/>
    <property type="project" value="UniProtKB-KW"/>
</dbReference>
<dbReference type="GO" id="GO:0032955">
    <property type="term" value="P:regulation of division septum assembly"/>
    <property type="evidence" value="ECO:0007669"/>
    <property type="project" value="InterPro"/>
</dbReference>
<dbReference type="Gene3D" id="3.30.1070.10">
    <property type="entry name" value="Cell division topological specificity factor MinE"/>
    <property type="match status" value="1"/>
</dbReference>
<dbReference type="HAMAP" id="MF_00262">
    <property type="entry name" value="MinE"/>
    <property type="match status" value="1"/>
</dbReference>
<dbReference type="InterPro" id="IPR005527">
    <property type="entry name" value="MinE"/>
</dbReference>
<dbReference type="InterPro" id="IPR036707">
    <property type="entry name" value="MinE_sf"/>
</dbReference>
<dbReference type="NCBIfam" id="TIGR01215">
    <property type="entry name" value="minE"/>
    <property type="match status" value="1"/>
</dbReference>
<dbReference type="NCBIfam" id="NF001422">
    <property type="entry name" value="PRK00296.1"/>
    <property type="match status" value="1"/>
</dbReference>
<dbReference type="Pfam" id="PF03776">
    <property type="entry name" value="MinE"/>
    <property type="match status" value="1"/>
</dbReference>
<dbReference type="SUPFAM" id="SSF55229">
    <property type="entry name" value="Cell division protein MinE topological specificity domain"/>
    <property type="match status" value="1"/>
</dbReference>
<geneLocation type="plasmid">
    <name>pRL11</name>
</geneLocation>
<evidence type="ECO:0000255" key="1">
    <source>
        <dbReference type="HAMAP-Rule" id="MF_00262"/>
    </source>
</evidence>
<keyword id="KW-0131">Cell cycle</keyword>
<keyword id="KW-0132">Cell division</keyword>
<keyword id="KW-0614">Plasmid</keyword>
<organism>
    <name type="scientific">Rhizobium johnstonii (strain DSM 114642 / LMG 32736 / 3841)</name>
    <name type="common">Rhizobium leguminosarum bv. viciae</name>
    <dbReference type="NCBI Taxonomy" id="216596"/>
    <lineage>
        <taxon>Bacteria</taxon>
        <taxon>Pseudomonadati</taxon>
        <taxon>Pseudomonadota</taxon>
        <taxon>Alphaproteobacteria</taxon>
        <taxon>Hyphomicrobiales</taxon>
        <taxon>Rhizobiaceae</taxon>
        <taxon>Rhizobium/Agrobacterium group</taxon>
        <taxon>Rhizobium</taxon>
        <taxon>Rhizobium johnstonii</taxon>
    </lineage>
</organism>
<reference key="1">
    <citation type="journal article" date="2006" name="Genome Biol.">
        <title>The genome of Rhizobium leguminosarum has recognizable core and accessory components.</title>
        <authorList>
            <person name="Young J.P.W."/>
            <person name="Crossman L.C."/>
            <person name="Johnston A.W.B."/>
            <person name="Thomson N.R."/>
            <person name="Ghazoui Z.F."/>
            <person name="Hull K.H."/>
            <person name="Wexler M."/>
            <person name="Curson A.R.J."/>
            <person name="Todd J.D."/>
            <person name="Poole P.S."/>
            <person name="Mauchline T.H."/>
            <person name="East A.K."/>
            <person name="Quail M.A."/>
            <person name="Churcher C."/>
            <person name="Arrowsmith C."/>
            <person name="Cherevach I."/>
            <person name="Chillingworth T."/>
            <person name="Clarke K."/>
            <person name="Cronin A."/>
            <person name="Davis P."/>
            <person name="Fraser A."/>
            <person name="Hance Z."/>
            <person name="Hauser H."/>
            <person name="Jagels K."/>
            <person name="Moule S."/>
            <person name="Mungall K."/>
            <person name="Norbertczak H."/>
            <person name="Rabbinowitsch E."/>
            <person name="Sanders M."/>
            <person name="Simmonds M."/>
            <person name="Whitehead S."/>
            <person name="Parkhill J."/>
        </authorList>
    </citation>
    <scope>NUCLEOTIDE SEQUENCE [LARGE SCALE GENOMIC DNA]</scope>
    <source>
        <strain>DSM 114642 / LMG 32736 / 3841</strain>
    </source>
</reference>
<protein>
    <recommendedName>
        <fullName evidence="1">Cell division topological specificity factor</fullName>
    </recommendedName>
</protein>
<sequence>MNIFRLFNKQRTAPAARERLQVLLAHERSSAGSDLVTLLREEILAVIAKHVQLDHDKVQVTIDRNEYVSTLEIDVEIPLNAAVQAA</sequence>
<gene>
    <name evidence="1" type="primary">minE</name>
    <name type="ordered locus">pRL110544</name>
</gene>
<feature type="chain" id="PRO_0000298174" description="Cell division topological specificity factor">
    <location>
        <begin position="1"/>
        <end position="86"/>
    </location>
</feature>
<accession>Q1M5J2</accession>